<gene>
    <name evidence="1" type="primary">rnz</name>
    <name type="ordered locus">BA_4364</name>
    <name type="ordered locus">GBAA_4364</name>
    <name type="ordered locus">BAS4049</name>
</gene>
<accession>Q81M88</accession>
<accession>Q6HTN9</accession>
<accession>Q6KMY0</accession>
<evidence type="ECO:0000255" key="1">
    <source>
        <dbReference type="HAMAP-Rule" id="MF_01818"/>
    </source>
</evidence>
<feature type="chain" id="PRO_0000155839" description="Ribonuclease Z">
    <location>
        <begin position="1"/>
        <end position="307"/>
    </location>
</feature>
<feature type="active site" description="Proton acceptor" evidence="1">
    <location>
        <position position="67"/>
    </location>
</feature>
<feature type="binding site" evidence="1">
    <location>
        <position position="63"/>
    </location>
    <ligand>
        <name>Zn(2+)</name>
        <dbReference type="ChEBI" id="CHEBI:29105"/>
        <label>1</label>
        <note>catalytic</note>
    </ligand>
</feature>
<feature type="binding site" evidence="1">
    <location>
        <position position="65"/>
    </location>
    <ligand>
        <name>Zn(2+)</name>
        <dbReference type="ChEBI" id="CHEBI:29105"/>
        <label>1</label>
        <note>catalytic</note>
    </ligand>
</feature>
<feature type="binding site" evidence="1">
    <location>
        <position position="67"/>
    </location>
    <ligand>
        <name>Zn(2+)</name>
        <dbReference type="ChEBI" id="CHEBI:29105"/>
        <label>2</label>
        <note>catalytic</note>
    </ligand>
</feature>
<feature type="binding site" evidence="1">
    <location>
        <position position="68"/>
    </location>
    <ligand>
        <name>Zn(2+)</name>
        <dbReference type="ChEBI" id="CHEBI:29105"/>
        <label>2</label>
        <note>catalytic</note>
    </ligand>
</feature>
<feature type="binding site" evidence="1">
    <location>
        <position position="141"/>
    </location>
    <ligand>
        <name>Zn(2+)</name>
        <dbReference type="ChEBI" id="CHEBI:29105"/>
        <label>1</label>
        <note>catalytic</note>
    </ligand>
</feature>
<feature type="binding site" evidence="1">
    <location>
        <position position="212"/>
    </location>
    <ligand>
        <name>Zn(2+)</name>
        <dbReference type="ChEBI" id="CHEBI:29105"/>
        <label>1</label>
        <note>catalytic</note>
    </ligand>
</feature>
<feature type="binding site" evidence="1">
    <location>
        <position position="212"/>
    </location>
    <ligand>
        <name>Zn(2+)</name>
        <dbReference type="ChEBI" id="CHEBI:29105"/>
        <label>2</label>
        <note>catalytic</note>
    </ligand>
</feature>
<feature type="binding site" evidence="1">
    <location>
        <position position="270"/>
    </location>
    <ligand>
        <name>Zn(2+)</name>
        <dbReference type="ChEBI" id="CHEBI:29105"/>
        <label>2</label>
        <note>catalytic</note>
    </ligand>
</feature>
<protein>
    <recommendedName>
        <fullName evidence="1">Ribonuclease Z</fullName>
        <shortName evidence="1">RNase Z</shortName>
        <ecNumber evidence="1">3.1.26.11</ecNumber>
    </recommendedName>
    <alternativeName>
        <fullName evidence="1">tRNA 3 endonuclease</fullName>
    </alternativeName>
    <alternativeName>
        <fullName evidence="1">tRNase Z</fullName>
    </alternativeName>
</protein>
<keyword id="KW-0255">Endonuclease</keyword>
<keyword id="KW-0378">Hydrolase</keyword>
<keyword id="KW-0479">Metal-binding</keyword>
<keyword id="KW-0540">Nuclease</keyword>
<keyword id="KW-1185">Reference proteome</keyword>
<keyword id="KW-0819">tRNA processing</keyword>
<keyword id="KW-0862">Zinc</keyword>
<proteinExistence type="inferred from homology"/>
<comment type="function">
    <text evidence="1">Zinc phosphodiesterase, which displays some tRNA 3'-processing endonuclease activity. Probably involved in tRNA maturation, by removing a 3'-trailer from precursor tRNA.</text>
</comment>
<comment type="catalytic activity">
    <reaction evidence="1">
        <text>Endonucleolytic cleavage of RNA, removing extra 3' nucleotides from tRNA precursor, generating 3' termini of tRNAs. A 3'-hydroxy group is left at the tRNA terminus and a 5'-phosphoryl group is left at the trailer molecule.</text>
        <dbReference type="EC" id="3.1.26.11"/>
    </reaction>
</comment>
<comment type="cofactor">
    <cofactor evidence="1">
        <name>Zn(2+)</name>
        <dbReference type="ChEBI" id="CHEBI:29105"/>
    </cofactor>
    <text evidence="1">Binds 2 Zn(2+) ions.</text>
</comment>
<comment type="subunit">
    <text evidence="1">Homodimer.</text>
</comment>
<comment type="similarity">
    <text evidence="1">Belongs to the RNase Z family.</text>
</comment>
<reference key="1">
    <citation type="journal article" date="2003" name="Nature">
        <title>The genome sequence of Bacillus anthracis Ames and comparison to closely related bacteria.</title>
        <authorList>
            <person name="Read T.D."/>
            <person name="Peterson S.N."/>
            <person name="Tourasse N.J."/>
            <person name="Baillie L.W."/>
            <person name="Paulsen I.T."/>
            <person name="Nelson K.E."/>
            <person name="Tettelin H."/>
            <person name="Fouts D.E."/>
            <person name="Eisen J.A."/>
            <person name="Gill S.R."/>
            <person name="Holtzapple E.K."/>
            <person name="Okstad O.A."/>
            <person name="Helgason E."/>
            <person name="Rilstone J."/>
            <person name="Wu M."/>
            <person name="Kolonay J.F."/>
            <person name="Beanan M.J."/>
            <person name="Dodson R.J."/>
            <person name="Brinkac L.M."/>
            <person name="Gwinn M.L."/>
            <person name="DeBoy R.T."/>
            <person name="Madpu R."/>
            <person name="Daugherty S.C."/>
            <person name="Durkin A.S."/>
            <person name="Haft D.H."/>
            <person name="Nelson W.C."/>
            <person name="Peterson J.D."/>
            <person name="Pop M."/>
            <person name="Khouri H.M."/>
            <person name="Radune D."/>
            <person name="Benton J.L."/>
            <person name="Mahamoud Y."/>
            <person name="Jiang L."/>
            <person name="Hance I.R."/>
            <person name="Weidman J.F."/>
            <person name="Berry K.J."/>
            <person name="Plaut R.D."/>
            <person name="Wolf A.M."/>
            <person name="Watkins K.L."/>
            <person name="Nierman W.C."/>
            <person name="Hazen A."/>
            <person name="Cline R.T."/>
            <person name="Redmond C."/>
            <person name="Thwaite J.E."/>
            <person name="White O."/>
            <person name="Salzberg S.L."/>
            <person name="Thomason B."/>
            <person name="Friedlander A.M."/>
            <person name="Koehler T.M."/>
            <person name="Hanna P.C."/>
            <person name="Kolstoe A.-B."/>
            <person name="Fraser C.M."/>
        </authorList>
    </citation>
    <scope>NUCLEOTIDE SEQUENCE [LARGE SCALE GENOMIC DNA]</scope>
    <source>
        <strain>Ames / isolate Porton</strain>
    </source>
</reference>
<reference key="2">
    <citation type="journal article" date="2009" name="J. Bacteriol.">
        <title>The complete genome sequence of Bacillus anthracis Ames 'Ancestor'.</title>
        <authorList>
            <person name="Ravel J."/>
            <person name="Jiang L."/>
            <person name="Stanley S.T."/>
            <person name="Wilson M.R."/>
            <person name="Decker R.S."/>
            <person name="Read T.D."/>
            <person name="Worsham P."/>
            <person name="Keim P.S."/>
            <person name="Salzberg S.L."/>
            <person name="Fraser-Liggett C.M."/>
            <person name="Rasko D.A."/>
        </authorList>
    </citation>
    <scope>NUCLEOTIDE SEQUENCE [LARGE SCALE GENOMIC DNA]</scope>
    <source>
        <strain>Ames ancestor</strain>
    </source>
</reference>
<reference key="3">
    <citation type="submission" date="2004-01" db="EMBL/GenBank/DDBJ databases">
        <title>Complete genome sequence of Bacillus anthracis Sterne.</title>
        <authorList>
            <person name="Brettin T.S."/>
            <person name="Bruce D."/>
            <person name="Challacombe J.F."/>
            <person name="Gilna P."/>
            <person name="Han C."/>
            <person name="Hill K."/>
            <person name="Hitchcock P."/>
            <person name="Jackson P."/>
            <person name="Keim P."/>
            <person name="Longmire J."/>
            <person name="Lucas S."/>
            <person name="Okinaka R."/>
            <person name="Richardson P."/>
            <person name="Rubin E."/>
            <person name="Tice H."/>
        </authorList>
    </citation>
    <scope>NUCLEOTIDE SEQUENCE [LARGE SCALE GENOMIC DNA]</scope>
    <source>
        <strain>Sterne</strain>
    </source>
</reference>
<organism>
    <name type="scientific">Bacillus anthracis</name>
    <dbReference type="NCBI Taxonomy" id="1392"/>
    <lineage>
        <taxon>Bacteria</taxon>
        <taxon>Bacillati</taxon>
        <taxon>Bacillota</taxon>
        <taxon>Bacilli</taxon>
        <taxon>Bacillales</taxon>
        <taxon>Bacillaceae</taxon>
        <taxon>Bacillus</taxon>
        <taxon>Bacillus cereus group</taxon>
    </lineage>
</organism>
<sequence length="307" mass="34181">MEFVFLGTGAGVPSKGRNVSAIALQLLEERGQTWLFDCGEATQHQILHTSVRPRRIEKIFITHLHGDHIFGLPGLLGSRSFQGGTTPLTVYGPKGIKQFIEVALSVSTTHVKYPLEIVEITEEGTVFEDNEFHVETKRLSHGIECFGYRIIEKDIQGALLVDKLLEIGVKPGPLFKRLKDGEVVELENGTILNGNDFIGPPQKGRVITILGDTRYCEASRELAQDADVLVHEATFAAEDEQQAYDYFHSTSKQAASIALQANAKRLILTHISSRYQGDTYKELLKEARELFSNTEIATDLKSFPVDR</sequence>
<dbReference type="EC" id="3.1.26.11" evidence="1"/>
<dbReference type="EMBL" id="AE016879">
    <property type="protein sequence ID" value="AAP28080.1"/>
    <property type="molecule type" value="Genomic_DNA"/>
</dbReference>
<dbReference type="EMBL" id="AE017334">
    <property type="protein sequence ID" value="AAT33484.1"/>
    <property type="molecule type" value="Genomic_DNA"/>
</dbReference>
<dbReference type="EMBL" id="AE017225">
    <property type="protein sequence ID" value="AAT56350.1"/>
    <property type="molecule type" value="Genomic_DNA"/>
</dbReference>
<dbReference type="RefSeq" id="NP_846594.1">
    <property type="nucleotide sequence ID" value="NC_003997.3"/>
</dbReference>
<dbReference type="RefSeq" id="WP_000397440.1">
    <property type="nucleotide sequence ID" value="NZ_WXXJ01000027.1"/>
</dbReference>
<dbReference type="RefSeq" id="YP_030299.1">
    <property type="nucleotide sequence ID" value="NC_005945.1"/>
</dbReference>
<dbReference type="SMR" id="Q81M88"/>
<dbReference type="STRING" id="261594.GBAA_4364"/>
<dbReference type="DNASU" id="1087591"/>
<dbReference type="GeneID" id="45024027"/>
<dbReference type="KEGG" id="ban:BA_4364"/>
<dbReference type="KEGG" id="banh:HYU01_21305"/>
<dbReference type="KEGG" id="bar:GBAA_4364"/>
<dbReference type="KEGG" id="bat:BAS4049"/>
<dbReference type="PATRIC" id="fig|198094.11.peg.4333"/>
<dbReference type="eggNOG" id="COG1234">
    <property type="taxonomic scope" value="Bacteria"/>
</dbReference>
<dbReference type="HOGENOM" id="CLU_031317_2_0_9"/>
<dbReference type="OMA" id="GTQRQMM"/>
<dbReference type="OrthoDB" id="9800940at2"/>
<dbReference type="Proteomes" id="UP000000427">
    <property type="component" value="Chromosome"/>
</dbReference>
<dbReference type="Proteomes" id="UP000000594">
    <property type="component" value="Chromosome"/>
</dbReference>
<dbReference type="GO" id="GO:0042781">
    <property type="term" value="F:3'-tRNA processing endoribonuclease activity"/>
    <property type="evidence" value="ECO:0007669"/>
    <property type="project" value="UniProtKB-UniRule"/>
</dbReference>
<dbReference type="GO" id="GO:0008270">
    <property type="term" value="F:zinc ion binding"/>
    <property type="evidence" value="ECO:0007669"/>
    <property type="project" value="UniProtKB-UniRule"/>
</dbReference>
<dbReference type="CDD" id="cd07717">
    <property type="entry name" value="RNaseZ_ZiPD-like_MBL-fold"/>
    <property type="match status" value="1"/>
</dbReference>
<dbReference type="FunFam" id="3.60.15.10:FF:000002">
    <property type="entry name" value="Ribonuclease Z"/>
    <property type="match status" value="1"/>
</dbReference>
<dbReference type="Gene3D" id="3.60.15.10">
    <property type="entry name" value="Ribonuclease Z/Hydroxyacylglutathione hydrolase-like"/>
    <property type="match status" value="1"/>
</dbReference>
<dbReference type="HAMAP" id="MF_01818">
    <property type="entry name" value="RNase_Z_BN"/>
    <property type="match status" value="1"/>
</dbReference>
<dbReference type="InterPro" id="IPR001279">
    <property type="entry name" value="Metallo-B-lactamas"/>
</dbReference>
<dbReference type="InterPro" id="IPR036866">
    <property type="entry name" value="RibonucZ/Hydroxyglut_hydro"/>
</dbReference>
<dbReference type="InterPro" id="IPR013471">
    <property type="entry name" value="RNase_Z/BN"/>
</dbReference>
<dbReference type="NCBIfam" id="NF000800">
    <property type="entry name" value="PRK00055.1-1"/>
    <property type="match status" value="1"/>
</dbReference>
<dbReference type="NCBIfam" id="NF000801">
    <property type="entry name" value="PRK00055.1-3"/>
    <property type="match status" value="1"/>
</dbReference>
<dbReference type="NCBIfam" id="TIGR02651">
    <property type="entry name" value="RNase_Z"/>
    <property type="match status" value="1"/>
</dbReference>
<dbReference type="PANTHER" id="PTHR46018">
    <property type="entry name" value="ZINC PHOSPHODIESTERASE ELAC PROTEIN 1"/>
    <property type="match status" value="1"/>
</dbReference>
<dbReference type="PANTHER" id="PTHR46018:SF2">
    <property type="entry name" value="ZINC PHOSPHODIESTERASE ELAC PROTEIN 1"/>
    <property type="match status" value="1"/>
</dbReference>
<dbReference type="Pfam" id="PF00753">
    <property type="entry name" value="Lactamase_B"/>
    <property type="match status" value="1"/>
</dbReference>
<dbReference type="Pfam" id="PF12706">
    <property type="entry name" value="Lactamase_B_2"/>
    <property type="match status" value="1"/>
</dbReference>
<dbReference type="SMART" id="SM00849">
    <property type="entry name" value="Lactamase_B"/>
    <property type="match status" value="1"/>
</dbReference>
<dbReference type="SUPFAM" id="SSF56281">
    <property type="entry name" value="Metallo-hydrolase/oxidoreductase"/>
    <property type="match status" value="1"/>
</dbReference>
<name>RNZ_BACAN</name>